<accession>Q7TWJ2</accession>
<accession>A0A1R3Y4A3</accession>
<accession>X2BPI5</accession>
<gene>
    <name type="primary">whiB3</name>
    <name type="ordered locus">BQ2027_MB3450</name>
</gene>
<evidence type="ECO:0000250" key="1">
    <source>
        <dbReference type="UniProtKB" id="P9WF41"/>
    </source>
</evidence>
<evidence type="ECO:0000250" key="2">
    <source>
        <dbReference type="UniProtKB" id="Q9S426"/>
    </source>
</evidence>
<evidence type="ECO:0000269" key="3">
    <source>
    </source>
</evidence>
<evidence type="ECO:0000305" key="4"/>
<reference key="1">
    <citation type="journal article" date="2003" name="Proc. Natl. Acad. Sci. U.S.A.">
        <title>The complete genome sequence of Mycobacterium bovis.</title>
        <authorList>
            <person name="Garnier T."/>
            <person name="Eiglmeier K."/>
            <person name="Camus J.-C."/>
            <person name="Medina N."/>
            <person name="Mansoor H."/>
            <person name="Pryor M."/>
            <person name="Duthoy S."/>
            <person name="Grondin S."/>
            <person name="Lacroix C."/>
            <person name="Monsempe C."/>
            <person name="Simon S."/>
            <person name="Harris B."/>
            <person name="Atkin R."/>
            <person name="Doggett J."/>
            <person name="Mayes R."/>
            <person name="Keating L."/>
            <person name="Wheeler P.R."/>
            <person name="Parkhill J."/>
            <person name="Barrell B.G."/>
            <person name="Cole S.T."/>
            <person name="Gordon S.V."/>
            <person name="Hewinson R.G."/>
        </authorList>
    </citation>
    <scope>NUCLEOTIDE SEQUENCE [LARGE SCALE GENOMIC DNA]</scope>
    <source>
        <strain>ATCC BAA-935 / AF2122/97</strain>
    </source>
</reference>
<reference key="2">
    <citation type="journal article" date="2017" name="Genome Announc.">
        <title>Updated reference genome sequence and annotation of Mycobacterium bovis AF2122/97.</title>
        <authorList>
            <person name="Malone K.M."/>
            <person name="Farrell D."/>
            <person name="Stuber T.P."/>
            <person name="Schubert O.T."/>
            <person name="Aebersold R."/>
            <person name="Robbe-Austerman S."/>
            <person name="Gordon S.V."/>
        </authorList>
    </citation>
    <scope>NUCLEOTIDE SEQUENCE [LARGE SCALE GENOMIC DNA]</scope>
    <scope>GENOME REANNOTATION</scope>
    <source>
        <strain>ATCC BAA-935 / AF2122/97</strain>
    </source>
</reference>
<reference key="3">
    <citation type="journal article" date="2002" name="Proc. Natl. Acad. Sci. U.S.A.">
        <title>Mycobacterium tuberculosis WhiB3 interacts with RpoV to affect host survival but is dispensable for in vivo growth.</title>
        <authorList>
            <person name="Steyn A.J."/>
            <person name="Collins D.M."/>
            <person name="Hondalus M.K."/>
            <person name="Jacobs W.R. Jr."/>
            <person name="Kawakami R.P."/>
            <person name="Bloom B.R."/>
        </authorList>
    </citation>
    <scope>FUNCTION</scope>
    <scope>DISRUPTION PHENOTYPE</scope>
    <source>
        <strain>ATCC 35723 / TMC 405</strain>
    </source>
</reference>
<keyword id="KW-0004">4Fe-4S</keyword>
<keyword id="KW-0963">Cytoplasm</keyword>
<keyword id="KW-1015">Disulfide bond</keyword>
<keyword id="KW-0238">DNA-binding</keyword>
<keyword id="KW-0408">Iron</keyword>
<keyword id="KW-0411">Iron-sulfur</keyword>
<keyword id="KW-0479">Metal-binding</keyword>
<keyword id="KW-1185">Reference proteome</keyword>
<keyword id="KW-0804">Transcription</keyword>
<keyword id="KW-0805">Transcription regulation</keyword>
<keyword id="KW-0843">Virulence</keyword>
<sequence>MPQPEQLPGPNADIWNWQLQGLCRGMDSSMFFHPDGERGRARTQREQRAKEMCRRCPVIEACRSHALEVGEPYGVWGGLSESERDLLLKGTMGRTRGIRRTA</sequence>
<proteinExistence type="inferred from homology"/>
<protein>
    <recommendedName>
        <fullName>Redox-responsive transcriptional regulator WhiB3</fullName>
    </recommendedName>
</protein>
<feature type="chain" id="PRO_0000420391" description="Redox-responsive transcriptional regulator WhiB3">
    <location>
        <begin position="1"/>
        <end position="102"/>
    </location>
</feature>
<feature type="domain" description="4Fe-4S Wbl-type">
    <location>
        <begin position="22"/>
        <end position="86"/>
    </location>
</feature>
<feature type="binding site" evidence="1">
    <location>
        <position position="23"/>
    </location>
    <ligand>
        <name>[4Fe-4S] cluster</name>
        <dbReference type="ChEBI" id="CHEBI:49883"/>
    </ligand>
</feature>
<feature type="binding site" evidence="1">
    <location>
        <position position="53"/>
    </location>
    <ligand>
        <name>[4Fe-4S] cluster</name>
        <dbReference type="ChEBI" id="CHEBI:49883"/>
    </ligand>
</feature>
<feature type="binding site" evidence="1">
    <location>
        <position position="56"/>
    </location>
    <ligand>
        <name>[4Fe-4S] cluster</name>
        <dbReference type="ChEBI" id="CHEBI:49883"/>
    </ligand>
</feature>
<feature type="binding site" evidence="1">
    <location>
        <position position="62"/>
    </location>
    <ligand>
        <name>[4Fe-4S] cluster</name>
        <dbReference type="ChEBI" id="CHEBI:49883"/>
    </ligand>
</feature>
<comment type="function">
    <text evidence="1 3">A redox-sensitive transcriptional regulator. Maintains intracellular redox homeostasis by regulating catabolic metabolism and polyketide biosynthesis. Regulates expression of the redox buffer ergothioneine (ERG). In concert with myothiol (MSH), another redox buffer, responds to low pH leading to acid resistance. Senses changes in the intracellular redox state and helps mediate a metabolic switchover to preferred in vivo carbon sources (fatty acids). The apo- but not holo-form probably binds DNA (By similarity). Plays a role in virulence (PubMed:11880648).</text>
</comment>
<comment type="cofactor">
    <cofactor evidence="1">
        <name>[4Fe-4S] cluster</name>
        <dbReference type="ChEBI" id="CHEBI:49883"/>
    </cofactor>
    <text evidence="1">Binds 1 [4Fe-4S] cluster per subunit. Following nitrosylation of the [4Fe-4S] cluster binds 1 [4Fe-8(NO)] cluster per subunit.</text>
</comment>
<comment type="subcellular location">
    <subcellularLocation>
        <location evidence="2">Cytoplasm</location>
    </subcellularLocation>
</comment>
<comment type="PTM">
    <text evidence="1">The Fe-S cluster can be nitrosylated by nitric oxide (NO).</text>
</comment>
<comment type="PTM">
    <text evidence="1">Upon Fe-S cluster removal intramolecular disulfide bonds are formed.</text>
</comment>
<comment type="disruption phenotype">
    <text evidence="3">Not essential for growth in culture, however required for growth in vivo in guinea pig infections. Note strain ATCC 35723 is virulent whereas ATCC BAA-935 is not.</text>
</comment>
<comment type="similarity">
    <text evidence="4">Belongs to the WhiB family.</text>
</comment>
<dbReference type="EMBL" id="LT708304">
    <property type="protein sequence ID" value="SIU02078.1"/>
    <property type="molecule type" value="Genomic_DNA"/>
</dbReference>
<dbReference type="RefSeq" id="NP_857090.1">
    <property type="nucleotide sequence ID" value="NC_002945.3"/>
</dbReference>
<dbReference type="RefSeq" id="WP_003418017.1">
    <property type="nucleotide sequence ID" value="NC_002945.4"/>
</dbReference>
<dbReference type="SMR" id="Q7TWJ2"/>
<dbReference type="GeneID" id="45427412"/>
<dbReference type="KEGG" id="mbo:BQ2027_MB3450"/>
<dbReference type="PATRIC" id="fig|233413.5.peg.3785"/>
<dbReference type="Proteomes" id="UP000001419">
    <property type="component" value="Chromosome"/>
</dbReference>
<dbReference type="GO" id="GO:0005737">
    <property type="term" value="C:cytoplasm"/>
    <property type="evidence" value="ECO:0007669"/>
    <property type="project" value="UniProtKB-SubCell"/>
</dbReference>
<dbReference type="GO" id="GO:0051539">
    <property type="term" value="F:4 iron, 4 sulfur cluster binding"/>
    <property type="evidence" value="ECO:0007669"/>
    <property type="project" value="UniProtKB-UniRule"/>
</dbReference>
<dbReference type="GO" id="GO:0035731">
    <property type="term" value="F:dinitrosyl-iron complex binding"/>
    <property type="evidence" value="ECO:0007669"/>
    <property type="project" value="UniProtKB-UniRule"/>
</dbReference>
<dbReference type="GO" id="GO:0003677">
    <property type="term" value="F:DNA binding"/>
    <property type="evidence" value="ECO:0007669"/>
    <property type="project" value="UniProtKB-UniRule"/>
</dbReference>
<dbReference type="GO" id="GO:0046872">
    <property type="term" value="F:metal ion binding"/>
    <property type="evidence" value="ECO:0007669"/>
    <property type="project" value="UniProtKB-KW"/>
</dbReference>
<dbReference type="GO" id="GO:0047134">
    <property type="term" value="F:protein-disulfide reductase [NAD(P)H] activity"/>
    <property type="evidence" value="ECO:0007669"/>
    <property type="project" value="TreeGrafter"/>
</dbReference>
<dbReference type="GO" id="GO:0045454">
    <property type="term" value="P:cell redox homeostasis"/>
    <property type="evidence" value="ECO:0007669"/>
    <property type="project" value="TreeGrafter"/>
</dbReference>
<dbReference type="GO" id="GO:0045892">
    <property type="term" value="P:negative regulation of DNA-templated transcription"/>
    <property type="evidence" value="ECO:0007669"/>
    <property type="project" value="TreeGrafter"/>
</dbReference>
<dbReference type="HAMAP" id="MF_01479">
    <property type="entry name" value="WhiB"/>
    <property type="match status" value="1"/>
</dbReference>
<dbReference type="InterPro" id="IPR034768">
    <property type="entry name" value="4FE4S_WBL"/>
</dbReference>
<dbReference type="InterPro" id="IPR003482">
    <property type="entry name" value="Whib"/>
</dbReference>
<dbReference type="PANTHER" id="PTHR38839:SF5">
    <property type="entry name" value="TRANSCRIPTIONAL REGULATOR WHID"/>
    <property type="match status" value="1"/>
</dbReference>
<dbReference type="PANTHER" id="PTHR38839">
    <property type="entry name" value="TRANSCRIPTIONAL REGULATOR WHID-RELATED"/>
    <property type="match status" value="1"/>
</dbReference>
<dbReference type="Pfam" id="PF02467">
    <property type="entry name" value="Whib"/>
    <property type="match status" value="1"/>
</dbReference>
<dbReference type="PROSITE" id="PS51674">
    <property type="entry name" value="4FE4S_WBL"/>
    <property type="match status" value="1"/>
</dbReference>
<organism>
    <name type="scientific">Mycobacterium bovis (strain ATCC BAA-935 / AF2122/97)</name>
    <dbReference type="NCBI Taxonomy" id="233413"/>
    <lineage>
        <taxon>Bacteria</taxon>
        <taxon>Bacillati</taxon>
        <taxon>Actinomycetota</taxon>
        <taxon>Actinomycetes</taxon>
        <taxon>Mycobacteriales</taxon>
        <taxon>Mycobacteriaceae</taxon>
        <taxon>Mycobacterium</taxon>
        <taxon>Mycobacterium tuberculosis complex</taxon>
    </lineage>
</organism>
<name>WHIB3_MYCBO</name>